<gene>
    <name evidence="6" type="primary">yap1-b</name>
    <name evidence="8" type="synonym">yap1</name>
</gene>
<comment type="function">
    <text evidence="2 3">Transcriptional regulator which can act both as a coactivator and a corepressor and is the critical downstream regulatory target in the Hippo signaling pathway that plays a pivotal role in organ size control and tumor suppression by restricting proliferation and promoting apoptosis (By similarity). Plays a key role in tissue tension and 3D tissue shape by regulating cortical actomyosin network formation (By similarity).</text>
</comment>
<comment type="subcellular location">
    <subcellularLocation>
        <location evidence="3">Cytoplasm</location>
    </subcellularLocation>
    <subcellularLocation>
        <location evidence="3">Nucleus</location>
    </subcellularLocation>
    <subcellularLocation>
        <location evidence="1">Cell junction</location>
        <location evidence="1">Tight junction</location>
    </subcellularLocation>
    <subcellularLocation>
        <location evidence="3">Cell membrane</location>
    </subcellularLocation>
    <text evidence="3">Both phosphorylation and cell density can regulate its subcellular localization. Phosphorylation sequesters it in the cytoplasm by inhibiting its translocation into the nucleus. At low density, predominantly nuclear and is translocated to the cytoplasm at high density.</text>
</comment>
<comment type="PTM">
    <text evidence="3">Phosphorylated by lats1 and lats2; leading to cytoplasmic translocation and inactivation.</text>
</comment>
<comment type="similarity">
    <text evidence="6">Belongs to the YAP1 family.</text>
</comment>
<keyword id="KW-0010">Activator</keyword>
<keyword id="KW-0965">Cell junction</keyword>
<keyword id="KW-1003">Cell membrane</keyword>
<keyword id="KW-0175">Coiled coil</keyword>
<keyword id="KW-0963">Cytoplasm</keyword>
<keyword id="KW-0472">Membrane</keyword>
<keyword id="KW-0539">Nucleus</keyword>
<keyword id="KW-0597">Phosphoprotein</keyword>
<keyword id="KW-1185">Reference proteome</keyword>
<keyword id="KW-0677">Repeat</keyword>
<keyword id="KW-0678">Repressor</keyword>
<keyword id="KW-0796">Tight junction</keyword>
<keyword id="KW-0804">Transcription</keyword>
<keyword id="KW-0805">Transcription regulation</keyword>
<accession>Q32NJ6</accession>
<organism>
    <name type="scientific">Xenopus laevis</name>
    <name type="common">African clawed frog</name>
    <dbReference type="NCBI Taxonomy" id="8355"/>
    <lineage>
        <taxon>Eukaryota</taxon>
        <taxon>Metazoa</taxon>
        <taxon>Chordata</taxon>
        <taxon>Craniata</taxon>
        <taxon>Vertebrata</taxon>
        <taxon>Euteleostomi</taxon>
        <taxon>Amphibia</taxon>
        <taxon>Batrachia</taxon>
        <taxon>Anura</taxon>
        <taxon>Pipoidea</taxon>
        <taxon>Pipidae</taxon>
        <taxon>Xenopodinae</taxon>
        <taxon>Xenopus</taxon>
        <taxon>Xenopus</taxon>
    </lineage>
</organism>
<feature type="chain" id="PRO_0000433908" description="Transcriptional coactivator YAP1-B">
    <location>
        <begin position="1"/>
        <end position="335"/>
    </location>
</feature>
<feature type="region of interest" description="Disordered" evidence="5">
    <location>
        <begin position="1"/>
        <end position="21"/>
    </location>
</feature>
<feature type="region of interest" description="Disordered" evidence="5">
    <location>
        <begin position="114"/>
        <end position="146"/>
    </location>
</feature>
<feature type="region of interest" description="Transactivation domain" evidence="3">
    <location>
        <begin position="137"/>
        <end position="335"/>
    </location>
</feature>
<feature type="coiled-coil region" evidence="4">
    <location>
        <begin position="145"/>
        <end position="173"/>
    </location>
</feature>
<feature type="compositionally biased region" description="Low complexity" evidence="5">
    <location>
        <begin position="1"/>
        <end position="13"/>
    </location>
</feature>
<feature type="compositionally biased region" description="Polar residues" evidence="5">
    <location>
        <begin position="114"/>
        <end position="124"/>
    </location>
</feature>
<feature type="compositionally biased region" description="Pro residues" evidence="5">
    <location>
        <begin position="126"/>
        <end position="136"/>
    </location>
</feature>
<feature type="modified residue" description="Phosphoserine; by LATS1 and LATS2" evidence="3">
    <location>
        <position position="30"/>
    </location>
</feature>
<dbReference type="EMBL" id="BC108591">
    <property type="protein sequence ID" value="AAI08592.1"/>
    <property type="molecule type" value="mRNA"/>
</dbReference>
<dbReference type="RefSeq" id="NP_001167495.1">
    <property type="nucleotide sequence ID" value="NM_001174024.1"/>
</dbReference>
<dbReference type="SMR" id="Q32NJ6"/>
<dbReference type="DNASU" id="100381098"/>
<dbReference type="GeneID" id="100381098"/>
<dbReference type="KEGG" id="xla:100381098"/>
<dbReference type="AGR" id="Xenbase:XB-GENE-952397"/>
<dbReference type="CTD" id="100381098"/>
<dbReference type="Xenbase" id="XB-GENE-952397">
    <property type="gene designation" value="yap1.S"/>
</dbReference>
<dbReference type="OrthoDB" id="3045089at2759"/>
<dbReference type="Proteomes" id="UP000186698">
    <property type="component" value="Chromosome 2S"/>
</dbReference>
<dbReference type="Bgee" id="100381098">
    <property type="expression patterns" value="Expressed in gastrula and 19 other cell types or tissues"/>
</dbReference>
<dbReference type="GO" id="GO:0005923">
    <property type="term" value="C:bicellular tight junction"/>
    <property type="evidence" value="ECO:0007669"/>
    <property type="project" value="UniProtKB-SubCell"/>
</dbReference>
<dbReference type="GO" id="GO:0005911">
    <property type="term" value="C:cell-cell junction"/>
    <property type="evidence" value="ECO:0000250"/>
    <property type="project" value="UniProtKB"/>
</dbReference>
<dbReference type="GO" id="GO:0005737">
    <property type="term" value="C:cytoplasm"/>
    <property type="evidence" value="ECO:0000250"/>
    <property type="project" value="UniProtKB"/>
</dbReference>
<dbReference type="GO" id="GO:0005634">
    <property type="term" value="C:nucleus"/>
    <property type="evidence" value="ECO:0000250"/>
    <property type="project" value="UniProtKB"/>
</dbReference>
<dbReference type="GO" id="GO:0005886">
    <property type="term" value="C:plasma membrane"/>
    <property type="evidence" value="ECO:0007669"/>
    <property type="project" value="UniProtKB-SubCell"/>
</dbReference>
<dbReference type="GO" id="GO:0003713">
    <property type="term" value="F:transcription coactivator activity"/>
    <property type="evidence" value="ECO:0000318"/>
    <property type="project" value="GO_Central"/>
</dbReference>
<dbReference type="GO" id="GO:0003714">
    <property type="term" value="F:transcription corepressor activity"/>
    <property type="evidence" value="ECO:0000318"/>
    <property type="project" value="GO_Central"/>
</dbReference>
<dbReference type="GO" id="GO:0035329">
    <property type="term" value="P:hippo signaling"/>
    <property type="evidence" value="ECO:0000318"/>
    <property type="project" value="GO_Central"/>
</dbReference>
<dbReference type="GO" id="GO:0045944">
    <property type="term" value="P:positive regulation of transcription by RNA polymerase II"/>
    <property type="evidence" value="ECO:0000318"/>
    <property type="project" value="GO_Central"/>
</dbReference>
<dbReference type="Gene3D" id="6.20.430.10">
    <property type="match status" value="1"/>
</dbReference>
<dbReference type="InterPro" id="IPR053819">
    <property type="entry name" value="TEADIR3_omega_loop"/>
</dbReference>
<dbReference type="InterPro" id="IPR051583">
    <property type="entry name" value="YAP1"/>
</dbReference>
<dbReference type="PANTHER" id="PTHR17616:SF9">
    <property type="entry name" value="TRANSCRIPTIONAL COACTIVATOR YAP1"/>
    <property type="match status" value="1"/>
</dbReference>
<dbReference type="PANTHER" id="PTHR17616">
    <property type="entry name" value="YES-ASSOCIATED PROTEIN YAP1 FAMILY MEMBER"/>
    <property type="match status" value="1"/>
</dbReference>
<dbReference type="Pfam" id="PF15238">
    <property type="entry name" value="TEADIR3"/>
    <property type="match status" value="1"/>
</dbReference>
<protein>
    <recommendedName>
        <fullName>Transcriptional coactivator YAP1-B</fullName>
        <shortName>Yes-associated protein 1-B</shortName>
    </recommendedName>
    <alternativeName>
        <fullName>Protein yorkie homolog-B</fullName>
    </alternativeName>
    <alternativeName>
        <fullName>Yes-associated protein YAP65 homolog B</fullName>
    </alternativeName>
</protein>
<evidence type="ECO:0000250" key="1">
    <source>
        <dbReference type="UniProtKB" id="A0A8C0NGY6"/>
    </source>
</evidence>
<evidence type="ECO:0000250" key="2">
    <source>
        <dbReference type="UniProtKB" id="H2LBU8"/>
    </source>
</evidence>
<evidence type="ECO:0000250" key="3">
    <source>
        <dbReference type="UniProtKB" id="P46937"/>
    </source>
</evidence>
<evidence type="ECO:0000255" key="4"/>
<evidence type="ECO:0000256" key="5">
    <source>
        <dbReference type="SAM" id="MobiDB-lite"/>
    </source>
</evidence>
<evidence type="ECO:0000305" key="6"/>
<evidence type="ECO:0000312" key="7">
    <source>
        <dbReference type="EMBL" id="AAI08592.1"/>
    </source>
</evidence>
<evidence type="ECO:0000312" key="8">
    <source>
        <dbReference type="Xenbase" id="XB-GENE-952397"/>
    </source>
</evidence>
<proteinExistence type="evidence at transcript level"/>
<name>YAP1B_XENLA</name>
<sequence length="335" mass="37120">MEPGSQQQPSAPGQQPPPVGHQIVHVRTDSETDLETLFNAVMNPKNANVPQTLPMRMRKLPDSFFKQPEPKSHSRHVDQTTTWQDPRKAMLSQINITAPTSPPVQQNIMTPTAMNQQRLSQSAPVKSPPALQPQSPPSGVLGSGGNQQMRLQQLQMEKERLRLKHQELLRQVRPQELALRSQIPPMEQDSGPPNPVCSSGISQELRTMTMNSSDPFLNSGTYHSRDESTDSGLSMSSYSVPRTPDDFLNSVDEMDTGEAITQSTIPTQQNRFPDYLETLPGTNVDLGTLEGEAMNVEGEELMPSLQEALSSDILNDMETVLAATKLDKESFLTWL</sequence>
<reference key="1">
    <citation type="submission" date="2005-11" db="EMBL/GenBank/DDBJ databases">
        <authorList>
            <consortium name="NIH - Xenopus Gene Collection (XGC) project"/>
        </authorList>
    </citation>
    <scope>NUCLEOTIDE SEQUENCE [LARGE SCALE MRNA]</scope>
    <source>
        <tissue evidence="7">Embryo</tissue>
    </source>
</reference>